<name>UCN1_RAT</name>
<keyword id="KW-0027">Amidation</keyword>
<keyword id="KW-0165">Cleavage on pair of basic residues</keyword>
<keyword id="KW-1009">Hearing</keyword>
<keyword id="KW-0372">Hormone</keyword>
<keyword id="KW-1185">Reference proteome</keyword>
<keyword id="KW-0964">Secreted</keyword>
<keyword id="KW-0732">Signal</keyword>
<reference key="1">
    <citation type="journal article" date="1995" name="Nature">
        <title>Urocortin, a mammalian neuropeptide related to fish urotensin I and to corticotropin-releasing factor.</title>
        <authorList>
            <person name="Vaughan J.M."/>
            <person name="Donaldson C.J."/>
            <person name="Bittencourt J."/>
            <person name="Perrin M.H."/>
            <person name="Lewis K.A."/>
            <person name="Sutton S.W."/>
            <person name="Chan R."/>
            <person name="Turnbull A."/>
            <person name="Lovejoy D."/>
            <person name="Rivier C."/>
            <person name="Rivier J.E."/>
            <person name="Sawchenko P."/>
            <person name="Vale W.W."/>
        </authorList>
    </citation>
    <scope>NUCLEOTIDE SEQUENCE [MRNA]</scope>
    <scope>FUNCTION</scope>
    <source>
        <strain>Sprague-Dawley</strain>
    </source>
</reference>
<reference key="2">
    <citation type="submission" date="1998-09" db="EMBL/GenBank/DDBJ databases">
        <title>Detection of rat urocortin in lymphoid tissues: implications for the functional assessment of urocortin as a novel neuro-immunomodulatory peptide.</title>
        <authorList>
            <person name="Park J.H."/>
            <person name="Lee Y.J."/>
            <person name="Kim K.L."/>
        </authorList>
    </citation>
    <scope>NUCLEOTIDE SEQUENCE</scope>
    <source>
        <strain>Lewis</strain>
    </source>
</reference>
<reference key="3">
    <citation type="journal article" date="2011" name="Am. J. Physiol.">
        <title>Urocortin 1 reduces food intake and ghrelin secretion via CRF(2) receptors.</title>
        <authorList>
            <person name="Yakabi K."/>
            <person name="Noguchi M."/>
            <person name="Ohno S."/>
            <person name="Ro S."/>
            <person name="Onouchi T."/>
            <person name="Ochiai M."/>
            <person name="Takabayashi H."/>
            <person name="Takayama K."/>
            <person name="Harada Y."/>
            <person name="Sadakane C."/>
            <person name="Hattori T."/>
        </authorList>
    </citation>
    <scope>FUNCTION</scope>
</reference>
<dbReference type="EMBL" id="U33935">
    <property type="protein sequence ID" value="AAA87566.1"/>
    <property type="molecule type" value="mRNA"/>
</dbReference>
<dbReference type="EMBL" id="AF093623">
    <property type="protein sequence ID" value="AAF63153.1"/>
    <property type="molecule type" value="Genomic_DNA"/>
</dbReference>
<dbReference type="PIR" id="S60262">
    <property type="entry name" value="S60262"/>
</dbReference>
<dbReference type="RefSeq" id="NP_062023.1">
    <property type="nucleotide sequence ID" value="NM_019150.2"/>
</dbReference>
<dbReference type="SMR" id="P55090"/>
<dbReference type="BioGRID" id="247834">
    <property type="interactions" value="5"/>
</dbReference>
<dbReference type="FunCoup" id="P55090">
    <property type="interactions" value="3"/>
</dbReference>
<dbReference type="IntAct" id="P55090">
    <property type="interactions" value="1"/>
</dbReference>
<dbReference type="STRING" id="10116.ENSRNOP00000008037"/>
<dbReference type="PaxDb" id="10116-ENSRNOP00000008037"/>
<dbReference type="Ensembl" id="ENSRNOT00000008037.3">
    <property type="protein sequence ID" value="ENSRNOP00000008037.1"/>
    <property type="gene ID" value="ENSRNOG00000006090.3"/>
</dbReference>
<dbReference type="GeneID" id="29151"/>
<dbReference type="KEGG" id="rno:29151"/>
<dbReference type="AGR" id="RGD:3929"/>
<dbReference type="CTD" id="7349"/>
<dbReference type="RGD" id="3929">
    <property type="gene designation" value="Ucn"/>
</dbReference>
<dbReference type="eggNOG" id="ENOG502S63E">
    <property type="taxonomic scope" value="Eukaryota"/>
</dbReference>
<dbReference type="GeneTree" id="ENSGT00940000154473"/>
<dbReference type="HOGENOM" id="CLU_138901_0_0_1"/>
<dbReference type="InParanoid" id="P55090"/>
<dbReference type="OMA" id="QNRIVFD"/>
<dbReference type="OrthoDB" id="9837731at2759"/>
<dbReference type="PhylomeDB" id="P55090"/>
<dbReference type="TreeFam" id="TF332956"/>
<dbReference type="Reactome" id="R-RNO-373080">
    <property type="pathway name" value="Class B/2 (Secretin family receptors)"/>
</dbReference>
<dbReference type="PRO" id="PR:P55090"/>
<dbReference type="Proteomes" id="UP000002494">
    <property type="component" value="Chromosome 6"/>
</dbReference>
<dbReference type="Bgee" id="ENSRNOG00000006090">
    <property type="expression patterns" value="Expressed in skeletal muscle tissue and 7 other cell types or tissues"/>
</dbReference>
<dbReference type="GO" id="GO:0030424">
    <property type="term" value="C:axon"/>
    <property type="evidence" value="ECO:0000314"/>
    <property type="project" value="RGD"/>
</dbReference>
<dbReference type="GO" id="GO:0043679">
    <property type="term" value="C:axon terminus"/>
    <property type="evidence" value="ECO:0000314"/>
    <property type="project" value="RGD"/>
</dbReference>
<dbReference type="GO" id="GO:0030425">
    <property type="term" value="C:dendrite"/>
    <property type="evidence" value="ECO:0000314"/>
    <property type="project" value="RGD"/>
</dbReference>
<dbReference type="GO" id="GO:0005576">
    <property type="term" value="C:extracellular region"/>
    <property type="evidence" value="ECO:0007669"/>
    <property type="project" value="UniProtKB-SubCell"/>
</dbReference>
<dbReference type="GO" id="GO:0043025">
    <property type="term" value="C:neuronal cell body"/>
    <property type="evidence" value="ECO:0000314"/>
    <property type="project" value="RGD"/>
</dbReference>
<dbReference type="GO" id="GO:0043204">
    <property type="term" value="C:perikaryon"/>
    <property type="evidence" value="ECO:0000314"/>
    <property type="project" value="RGD"/>
</dbReference>
<dbReference type="GO" id="GO:0043196">
    <property type="term" value="C:varicosity"/>
    <property type="evidence" value="ECO:0000314"/>
    <property type="project" value="RGD"/>
</dbReference>
<dbReference type="GO" id="GO:0051430">
    <property type="term" value="F:corticotropin-releasing hormone receptor 1 binding"/>
    <property type="evidence" value="ECO:0000353"/>
    <property type="project" value="RGD"/>
</dbReference>
<dbReference type="GO" id="GO:0051431">
    <property type="term" value="F:corticotropin-releasing hormone receptor 2 binding"/>
    <property type="evidence" value="ECO:0000353"/>
    <property type="project" value="RGD"/>
</dbReference>
<dbReference type="GO" id="GO:0001664">
    <property type="term" value="F:G protein-coupled receptor binding"/>
    <property type="evidence" value="ECO:0000314"/>
    <property type="project" value="RGD"/>
</dbReference>
<dbReference type="GO" id="GO:0046811">
    <property type="term" value="F:histone deacetylase inhibitor activity"/>
    <property type="evidence" value="ECO:0000314"/>
    <property type="project" value="RGD"/>
</dbReference>
<dbReference type="GO" id="GO:0005179">
    <property type="term" value="F:hormone activity"/>
    <property type="evidence" value="ECO:0007669"/>
    <property type="project" value="UniProtKB-KW"/>
</dbReference>
<dbReference type="GO" id="GO:0009060">
    <property type="term" value="P:aerobic respiration"/>
    <property type="evidence" value="ECO:0000314"/>
    <property type="project" value="RGD"/>
</dbReference>
<dbReference type="GO" id="GO:0008306">
    <property type="term" value="P:associative learning"/>
    <property type="evidence" value="ECO:0000314"/>
    <property type="project" value="RGD"/>
</dbReference>
<dbReference type="GO" id="GO:0042756">
    <property type="term" value="P:drinking behavior"/>
    <property type="evidence" value="ECO:0000315"/>
    <property type="project" value="RGD"/>
</dbReference>
<dbReference type="GO" id="GO:0007631">
    <property type="term" value="P:feeding behavior"/>
    <property type="evidence" value="ECO:0000315"/>
    <property type="project" value="RGD"/>
</dbReference>
<dbReference type="GO" id="GO:0007565">
    <property type="term" value="P:female pregnancy"/>
    <property type="evidence" value="ECO:0000270"/>
    <property type="project" value="RGD"/>
</dbReference>
<dbReference type="GO" id="GO:0007611">
    <property type="term" value="P:learning or memory"/>
    <property type="evidence" value="ECO:0000314"/>
    <property type="project" value="RGD"/>
</dbReference>
<dbReference type="GO" id="GO:0043066">
    <property type="term" value="P:negative regulation of apoptotic process"/>
    <property type="evidence" value="ECO:0000314"/>
    <property type="project" value="RGD"/>
</dbReference>
<dbReference type="GO" id="GO:0032099">
    <property type="term" value="P:negative regulation of appetite"/>
    <property type="evidence" value="ECO:0000314"/>
    <property type="project" value="RGD"/>
</dbReference>
<dbReference type="GO" id="GO:0045776">
    <property type="term" value="P:negative regulation of blood pressure"/>
    <property type="evidence" value="ECO:0000314"/>
    <property type="project" value="RGD"/>
</dbReference>
<dbReference type="GO" id="GO:0045792">
    <property type="term" value="P:negative regulation of cell size"/>
    <property type="evidence" value="ECO:0000314"/>
    <property type="project" value="RGD"/>
</dbReference>
<dbReference type="GO" id="GO:2000252">
    <property type="term" value="P:negative regulation of feeding behavior"/>
    <property type="evidence" value="ECO:0000314"/>
    <property type="project" value="RGD"/>
</dbReference>
<dbReference type="GO" id="GO:0010629">
    <property type="term" value="P:negative regulation of gene expression"/>
    <property type="evidence" value="ECO:0000314"/>
    <property type="project" value="RGD"/>
</dbReference>
<dbReference type="GO" id="GO:0046888">
    <property type="term" value="P:negative regulation of hormone secretion"/>
    <property type="evidence" value="ECO:0000314"/>
    <property type="project" value="RGD"/>
</dbReference>
<dbReference type="GO" id="GO:0043524">
    <property type="term" value="P:negative regulation of neuron apoptotic process"/>
    <property type="evidence" value="ECO:0000314"/>
    <property type="project" value="RGD"/>
</dbReference>
<dbReference type="GO" id="GO:0031175">
    <property type="term" value="P:neuron projection development"/>
    <property type="evidence" value="ECO:0000314"/>
    <property type="project" value="RGD"/>
</dbReference>
<dbReference type="GO" id="GO:0007218">
    <property type="term" value="P:neuropeptide signaling pathway"/>
    <property type="evidence" value="ECO:0000314"/>
    <property type="project" value="RGD"/>
</dbReference>
<dbReference type="GO" id="GO:2000987">
    <property type="term" value="P:positive regulation of behavioral fear response"/>
    <property type="evidence" value="ECO:0000314"/>
    <property type="project" value="RGD"/>
</dbReference>
<dbReference type="GO" id="GO:0090280">
    <property type="term" value="P:positive regulation of calcium ion import"/>
    <property type="evidence" value="ECO:0000314"/>
    <property type="project" value="RGD"/>
</dbReference>
<dbReference type="GO" id="GO:0141163">
    <property type="term" value="P:positive regulation of cAMP/PKA signal transduction"/>
    <property type="evidence" value="ECO:0000314"/>
    <property type="project" value="RGD"/>
</dbReference>
<dbReference type="GO" id="GO:0060452">
    <property type="term" value="P:positive regulation of cardiac muscle contraction"/>
    <property type="evidence" value="ECO:0000314"/>
    <property type="project" value="RGD"/>
</dbReference>
<dbReference type="GO" id="GO:0030307">
    <property type="term" value="P:positive regulation of cell growth"/>
    <property type="evidence" value="ECO:0000314"/>
    <property type="project" value="RGD"/>
</dbReference>
<dbReference type="GO" id="GO:0032967">
    <property type="term" value="P:positive regulation of collagen biosynthetic process"/>
    <property type="evidence" value="ECO:0000314"/>
    <property type="project" value="RGD"/>
</dbReference>
<dbReference type="GO" id="GO:0051461">
    <property type="term" value="P:positive regulation of corticotropin secretion"/>
    <property type="evidence" value="ECO:0000314"/>
    <property type="project" value="RGD"/>
</dbReference>
<dbReference type="GO" id="GO:0045740">
    <property type="term" value="P:positive regulation of DNA replication"/>
    <property type="evidence" value="ECO:0000314"/>
    <property type="project" value="RGD"/>
</dbReference>
<dbReference type="GO" id="GO:0010628">
    <property type="term" value="P:positive regulation of gene expression"/>
    <property type="evidence" value="ECO:0000314"/>
    <property type="project" value="RGD"/>
</dbReference>
<dbReference type="GO" id="GO:0032755">
    <property type="term" value="P:positive regulation of interleukin-6 production"/>
    <property type="evidence" value="ECO:0000314"/>
    <property type="project" value="RGD"/>
</dbReference>
<dbReference type="GO" id="GO:0045944">
    <property type="term" value="P:positive regulation of transcription by RNA polymerase II"/>
    <property type="evidence" value="ECO:0000266"/>
    <property type="project" value="RGD"/>
</dbReference>
<dbReference type="GO" id="GO:0045727">
    <property type="term" value="P:positive regulation of translation"/>
    <property type="evidence" value="ECO:0000314"/>
    <property type="project" value="RGD"/>
</dbReference>
<dbReference type="GO" id="GO:0043117">
    <property type="term" value="P:positive regulation of vascular permeability"/>
    <property type="evidence" value="ECO:0000314"/>
    <property type="project" value="RGD"/>
</dbReference>
<dbReference type="GO" id="GO:0051966">
    <property type="term" value="P:regulation of synaptic transmission, glutamatergic"/>
    <property type="evidence" value="ECO:0000314"/>
    <property type="project" value="RGD"/>
</dbReference>
<dbReference type="GO" id="GO:0010996">
    <property type="term" value="P:response to auditory stimulus"/>
    <property type="evidence" value="ECO:0000266"/>
    <property type="project" value="RGD"/>
</dbReference>
<dbReference type="GO" id="GO:0032355">
    <property type="term" value="P:response to estradiol"/>
    <property type="evidence" value="ECO:0000270"/>
    <property type="project" value="RGD"/>
</dbReference>
<dbReference type="GO" id="GO:0051384">
    <property type="term" value="P:response to glucocorticoid"/>
    <property type="evidence" value="ECO:0000270"/>
    <property type="project" value="RGD"/>
</dbReference>
<dbReference type="GO" id="GO:0006979">
    <property type="term" value="P:response to oxidative stress"/>
    <property type="evidence" value="ECO:0000314"/>
    <property type="project" value="RGD"/>
</dbReference>
<dbReference type="GO" id="GO:0048265">
    <property type="term" value="P:response to pain"/>
    <property type="evidence" value="ECO:0000270"/>
    <property type="project" value="RGD"/>
</dbReference>
<dbReference type="GO" id="GO:0007605">
    <property type="term" value="P:sensory perception of sound"/>
    <property type="evidence" value="ECO:0007669"/>
    <property type="project" value="UniProtKB-KW"/>
</dbReference>
<dbReference type="GO" id="GO:0035176">
    <property type="term" value="P:social behavior"/>
    <property type="evidence" value="ECO:0000314"/>
    <property type="project" value="RGD"/>
</dbReference>
<dbReference type="GO" id="GO:0001964">
    <property type="term" value="P:startle response"/>
    <property type="evidence" value="ECO:0000266"/>
    <property type="project" value="RGD"/>
</dbReference>
<dbReference type="GO" id="GO:0042311">
    <property type="term" value="P:vasodilation"/>
    <property type="evidence" value="ECO:0000314"/>
    <property type="project" value="RGD"/>
</dbReference>
<dbReference type="Gene3D" id="6.10.250.1920">
    <property type="match status" value="1"/>
</dbReference>
<dbReference type="InterPro" id="IPR018446">
    <property type="entry name" value="Corticotropin-releasing_fac_CS"/>
</dbReference>
<dbReference type="InterPro" id="IPR000187">
    <property type="entry name" value="CRF"/>
</dbReference>
<dbReference type="InterPro" id="IPR003620">
    <property type="entry name" value="Urocortin_CRF"/>
</dbReference>
<dbReference type="PANTHER" id="PTHR15035">
    <property type="entry name" value="CORTICOLIBERIN/UROCORTIN"/>
    <property type="match status" value="1"/>
</dbReference>
<dbReference type="PANTHER" id="PTHR15035:SF11">
    <property type="entry name" value="UROCORTIN"/>
    <property type="match status" value="1"/>
</dbReference>
<dbReference type="Pfam" id="PF00473">
    <property type="entry name" value="CRF"/>
    <property type="match status" value="1"/>
</dbReference>
<dbReference type="PRINTS" id="PR01612">
    <property type="entry name" value="CRFFAMILY"/>
</dbReference>
<dbReference type="SMART" id="SM00039">
    <property type="entry name" value="CRF"/>
    <property type="match status" value="1"/>
</dbReference>
<dbReference type="PROSITE" id="PS00511">
    <property type="entry name" value="CRF"/>
    <property type="match status" value="1"/>
</dbReference>
<protein>
    <recommendedName>
        <fullName>Urocortin</fullName>
    </recommendedName>
    <alternativeName>
        <fullName>Corticotensin</fullName>
    </alternativeName>
</protein>
<feature type="signal peptide" evidence="4">
    <location>
        <begin position="1"/>
        <end position="25"/>
    </location>
</feature>
<feature type="propeptide" id="PRO_0000006237">
    <location>
        <begin position="26"/>
        <end position="80"/>
    </location>
</feature>
<feature type="peptide" id="PRO_0000006238" description="Urocortin">
    <location>
        <begin position="81"/>
        <end position="120"/>
    </location>
</feature>
<feature type="modified residue" description="Valine amide" evidence="1">
    <location>
        <position position="120"/>
    </location>
</feature>
<comment type="function">
    <text evidence="2 3 5 6">Acts in vitro to stimulate the secretion of adrenocorticotropic hormone (ACTH) (PubMed:7477349). Binds with high affinity to CRF receptor types 1, 2-alpha, and 2-beta (By similarity). Plays a role in the establishment of normal hearing thresholds (By similarity). Reduces food intake and regulates ghrelin levels in gastric body and plasma (PubMed:21540451).</text>
</comment>
<comment type="subunit">
    <text evidence="1">Interacts with CRHR1 and CRHR2 (via their N-terminal extracellular domain).</text>
</comment>
<comment type="interaction">
    <interactant intactId="EBI-9030248">
        <id>P55090</id>
    </interactant>
    <interactant intactId="EBI-9030306">
        <id>P35353</id>
        <label>Crhr1</label>
    </interactant>
    <organismsDiffer>false</organismsDiffer>
    <experiments>3</experiments>
</comment>
<comment type="subcellular location">
    <subcellularLocation>
        <location>Secreted</location>
    </subcellularLocation>
</comment>
<comment type="similarity">
    <text evidence="7">Belongs to the sauvagine/corticotropin-releasing factor/urotensin I family.</text>
</comment>
<accession>P55090</accession>
<organism>
    <name type="scientific">Rattus norvegicus</name>
    <name type="common">Rat</name>
    <dbReference type="NCBI Taxonomy" id="10116"/>
    <lineage>
        <taxon>Eukaryota</taxon>
        <taxon>Metazoa</taxon>
        <taxon>Chordata</taxon>
        <taxon>Craniata</taxon>
        <taxon>Vertebrata</taxon>
        <taxon>Euteleostomi</taxon>
        <taxon>Mammalia</taxon>
        <taxon>Eutheria</taxon>
        <taxon>Euarchontoglires</taxon>
        <taxon>Glires</taxon>
        <taxon>Rodentia</taxon>
        <taxon>Myomorpha</taxon>
        <taxon>Muroidea</taxon>
        <taxon>Muridae</taxon>
        <taxon>Murinae</taxon>
        <taxon>Rattus</taxon>
    </lineage>
</organism>
<proteinExistence type="evidence at protein level"/>
<sequence length="122" mass="13711">MRQRGRATLLVALLLLVQLRPESSQWSPAAAAANVVQDPNLRWNPGVRNQGGGVRALLLLLAERFPRRAGSEPAGERQRRDDPPLSIDLTFHLLRTLLELARTQSQRERAEQNRIIFDSVGK</sequence>
<gene>
    <name type="primary">Ucn</name>
</gene>
<evidence type="ECO:0000250" key="1"/>
<evidence type="ECO:0000250" key="2">
    <source>
        <dbReference type="UniProtKB" id="P55089"/>
    </source>
</evidence>
<evidence type="ECO:0000250" key="3">
    <source>
        <dbReference type="UniProtKB" id="P81615"/>
    </source>
</evidence>
<evidence type="ECO:0000255" key="4"/>
<evidence type="ECO:0000269" key="5">
    <source>
    </source>
</evidence>
<evidence type="ECO:0000269" key="6">
    <source>
    </source>
</evidence>
<evidence type="ECO:0000305" key="7"/>